<dbReference type="EMBL" id="CM003147">
    <property type="protein sequence ID" value="KIS68789.1"/>
    <property type="molecule type" value="Genomic_DNA"/>
</dbReference>
<dbReference type="RefSeq" id="XP_011389744.1">
    <property type="nucleotide sequence ID" value="XM_011391442.1"/>
</dbReference>
<dbReference type="SMR" id="Q4P958"/>
<dbReference type="FunCoup" id="Q4P958">
    <property type="interactions" value="663"/>
</dbReference>
<dbReference type="STRING" id="237631.Q4P958"/>
<dbReference type="EnsemblFungi" id="KIS68789">
    <property type="protein sequence ID" value="KIS68789"/>
    <property type="gene ID" value="UMAG_03355"/>
</dbReference>
<dbReference type="GeneID" id="23563832"/>
<dbReference type="KEGG" id="uma:UMAG_03355"/>
<dbReference type="VEuPathDB" id="FungiDB:UMAG_03355"/>
<dbReference type="eggNOG" id="KOG1691">
    <property type="taxonomic scope" value="Eukaryota"/>
</dbReference>
<dbReference type="HOGENOM" id="CLU_066963_3_0_1"/>
<dbReference type="InParanoid" id="Q4P958"/>
<dbReference type="OMA" id="DVFEACF"/>
<dbReference type="OrthoDB" id="759142at2759"/>
<dbReference type="Proteomes" id="UP000000561">
    <property type="component" value="Chromosome 8"/>
</dbReference>
<dbReference type="GO" id="GO:0030134">
    <property type="term" value="C:COPII-coated ER to Golgi transport vesicle"/>
    <property type="evidence" value="ECO:0000318"/>
    <property type="project" value="GO_Central"/>
</dbReference>
<dbReference type="GO" id="GO:0005783">
    <property type="term" value="C:endoplasmic reticulum"/>
    <property type="evidence" value="ECO:0000318"/>
    <property type="project" value="GO_Central"/>
</dbReference>
<dbReference type="GO" id="GO:0005789">
    <property type="term" value="C:endoplasmic reticulum membrane"/>
    <property type="evidence" value="ECO:0007669"/>
    <property type="project" value="UniProtKB-SubCell"/>
</dbReference>
<dbReference type="GO" id="GO:0005793">
    <property type="term" value="C:endoplasmic reticulum-Golgi intermediate compartment"/>
    <property type="evidence" value="ECO:0000318"/>
    <property type="project" value="GO_Central"/>
</dbReference>
<dbReference type="GO" id="GO:0005794">
    <property type="term" value="C:Golgi apparatus"/>
    <property type="evidence" value="ECO:0000318"/>
    <property type="project" value="GO_Central"/>
</dbReference>
<dbReference type="GO" id="GO:0000139">
    <property type="term" value="C:Golgi membrane"/>
    <property type="evidence" value="ECO:0007669"/>
    <property type="project" value="UniProtKB-SubCell"/>
</dbReference>
<dbReference type="GO" id="GO:0006888">
    <property type="term" value="P:endoplasmic reticulum to Golgi vesicle-mediated transport"/>
    <property type="evidence" value="ECO:0000318"/>
    <property type="project" value="GO_Central"/>
</dbReference>
<dbReference type="GO" id="GO:0007030">
    <property type="term" value="P:Golgi organization"/>
    <property type="evidence" value="ECO:0000318"/>
    <property type="project" value="GO_Central"/>
</dbReference>
<dbReference type="GO" id="GO:0006886">
    <property type="term" value="P:intracellular protein transport"/>
    <property type="evidence" value="ECO:0000318"/>
    <property type="project" value="GO_Central"/>
</dbReference>
<dbReference type="InterPro" id="IPR015720">
    <property type="entry name" value="Emp24-like"/>
</dbReference>
<dbReference type="InterPro" id="IPR009038">
    <property type="entry name" value="GOLD_dom"/>
</dbReference>
<dbReference type="PANTHER" id="PTHR22811">
    <property type="entry name" value="TRANSMEMBRANE EMP24 DOMAIN-CONTAINING PROTEIN"/>
    <property type="match status" value="1"/>
</dbReference>
<dbReference type="Pfam" id="PF01105">
    <property type="entry name" value="EMP24_GP25L"/>
    <property type="match status" value="1"/>
</dbReference>
<dbReference type="SMART" id="SM01190">
    <property type="entry name" value="EMP24_GP25L"/>
    <property type="match status" value="1"/>
</dbReference>
<keyword id="KW-0256">Endoplasmic reticulum</keyword>
<keyword id="KW-0931">ER-Golgi transport</keyword>
<keyword id="KW-0333">Golgi apparatus</keyword>
<keyword id="KW-0472">Membrane</keyword>
<keyword id="KW-0653">Protein transport</keyword>
<keyword id="KW-1185">Reference proteome</keyword>
<keyword id="KW-0732">Signal</keyword>
<keyword id="KW-0812">Transmembrane</keyword>
<keyword id="KW-1133">Transmembrane helix</keyword>
<keyword id="KW-0813">Transport</keyword>
<sequence length="224" mass="24828">MIPPRSLGSTAALLLVLLFTTLASAIKFDLPSNAHPHTKCIWNYALSDSLVIVTASVVAKEPFDFSHQRVDIEVVDGSQHNNVYLSKKAIKGETRLAINTHSHADLGVCFKNTLTSKSGNQIPVVTIDLDVDIGADAVDYNAIANQESLSGLETEMRKLEAVANEIVNEMEYLKKRELRMADTNLSTNMRVTNFAILTLIALIALGVWQVFHLRGFFKRKYLID</sequence>
<name>TMEDA_MYCMD</name>
<proteinExistence type="inferred from homology"/>
<reference key="1">
    <citation type="journal article" date="2006" name="Nature">
        <title>Insights from the genome of the biotrophic fungal plant pathogen Ustilago maydis.</title>
        <authorList>
            <person name="Kaemper J."/>
            <person name="Kahmann R."/>
            <person name="Boelker M."/>
            <person name="Ma L.-J."/>
            <person name="Brefort T."/>
            <person name="Saville B.J."/>
            <person name="Banuett F."/>
            <person name="Kronstad J.W."/>
            <person name="Gold S.E."/>
            <person name="Mueller O."/>
            <person name="Perlin M.H."/>
            <person name="Woesten H.A.B."/>
            <person name="de Vries R."/>
            <person name="Ruiz-Herrera J."/>
            <person name="Reynaga-Pena C.G."/>
            <person name="Snetselaar K."/>
            <person name="McCann M."/>
            <person name="Perez-Martin J."/>
            <person name="Feldbruegge M."/>
            <person name="Basse C.W."/>
            <person name="Steinberg G."/>
            <person name="Ibeas J.I."/>
            <person name="Holloman W."/>
            <person name="Guzman P."/>
            <person name="Farman M.L."/>
            <person name="Stajich J.E."/>
            <person name="Sentandreu R."/>
            <person name="Gonzalez-Prieto J.M."/>
            <person name="Kennell J.C."/>
            <person name="Molina L."/>
            <person name="Schirawski J."/>
            <person name="Mendoza-Mendoza A."/>
            <person name="Greilinger D."/>
            <person name="Muench K."/>
            <person name="Roessel N."/>
            <person name="Scherer M."/>
            <person name="Vranes M."/>
            <person name="Ladendorf O."/>
            <person name="Vincon V."/>
            <person name="Fuchs U."/>
            <person name="Sandrock B."/>
            <person name="Meng S."/>
            <person name="Ho E.C.H."/>
            <person name="Cahill M.J."/>
            <person name="Boyce K.J."/>
            <person name="Klose J."/>
            <person name="Klosterman S.J."/>
            <person name="Deelstra H.J."/>
            <person name="Ortiz-Castellanos L."/>
            <person name="Li W."/>
            <person name="Sanchez-Alonso P."/>
            <person name="Schreier P.H."/>
            <person name="Haeuser-Hahn I."/>
            <person name="Vaupel M."/>
            <person name="Koopmann E."/>
            <person name="Friedrich G."/>
            <person name="Voss H."/>
            <person name="Schlueter T."/>
            <person name="Margolis J."/>
            <person name="Platt D."/>
            <person name="Swimmer C."/>
            <person name="Gnirke A."/>
            <person name="Chen F."/>
            <person name="Vysotskaia V."/>
            <person name="Mannhaupt G."/>
            <person name="Gueldener U."/>
            <person name="Muensterkoetter M."/>
            <person name="Haase D."/>
            <person name="Oesterheld M."/>
            <person name="Mewes H.-W."/>
            <person name="Mauceli E.W."/>
            <person name="DeCaprio D."/>
            <person name="Wade C.M."/>
            <person name="Butler J."/>
            <person name="Young S.K."/>
            <person name="Jaffe D.B."/>
            <person name="Calvo S.E."/>
            <person name="Nusbaum C."/>
            <person name="Galagan J.E."/>
            <person name="Birren B.W."/>
        </authorList>
    </citation>
    <scope>NUCLEOTIDE SEQUENCE [LARGE SCALE GENOMIC DNA]</scope>
    <source>
        <strain>DSM 14603 / FGSC 9021 / UM521</strain>
    </source>
</reference>
<reference key="2">
    <citation type="submission" date="2014-09" db="EMBL/GenBank/DDBJ databases">
        <authorList>
            <person name="Gueldener U."/>
            <person name="Muensterkoetter M."/>
            <person name="Walter M.C."/>
            <person name="Mannhaupt G."/>
            <person name="Kahmann R."/>
        </authorList>
    </citation>
    <scope>GENOME REANNOTATION</scope>
    <source>
        <strain>DSM 14603 / FGSC 9021 / UM521</strain>
    </source>
</reference>
<organism>
    <name type="scientific">Mycosarcoma maydis</name>
    <name type="common">Corn smut fungus</name>
    <name type="synonym">Ustilago maydis</name>
    <dbReference type="NCBI Taxonomy" id="5270"/>
    <lineage>
        <taxon>Eukaryota</taxon>
        <taxon>Fungi</taxon>
        <taxon>Dikarya</taxon>
        <taxon>Basidiomycota</taxon>
        <taxon>Ustilaginomycotina</taxon>
        <taxon>Ustilaginomycetes</taxon>
        <taxon>Ustilaginales</taxon>
        <taxon>Ustilaginaceae</taxon>
        <taxon>Mycosarcoma</taxon>
    </lineage>
</organism>
<comment type="function">
    <text evidence="1">Constituent of COPII-coated endoplasmic reticulum-derived transport vesicles. Required for efficient transport of a subset of secretory proteins to the Golgi. Facilitates retrograde transport from the Golgi to the endoplasmic reticulum (By similarity).</text>
</comment>
<comment type="subcellular location">
    <subcellularLocation>
        <location evidence="1">Endoplasmic reticulum membrane</location>
        <topology evidence="1">Single-pass type I membrane protein</topology>
    </subcellularLocation>
    <subcellularLocation>
        <location evidence="1">Golgi apparatus membrane</location>
        <topology evidence="1">Single-pass type I membrane protein</topology>
    </subcellularLocation>
    <text evidence="1">Recycles between endoplasmic reticulum and Golgi.</text>
</comment>
<comment type="similarity">
    <text evidence="3">Belongs to the EMP24/GP25L family.</text>
</comment>
<accession>Q4P958</accession>
<accession>A0A0D1DX41</accession>
<protein>
    <recommendedName>
        <fullName>Endoplasmic reticulum vesicle protein 25</fullName>
    </recommendedName>
</protein>
<gene>
    <name type="primary">ERV25</name>
    <name type="ORF">UMAG_03355</name>
</gene>
<evidence type="ECO:0000250" key="1"/>
<evidence type="ECO:0000255" key="2"/>
<evidence type="ECO:0000305" key="3"/>
<feature type="signal peptide" evidence="2">
    <location>
        <begin position="1"/>
        <end position="25"/>
    </location>
</feature>
<feature type="chain" id="PRO_0000237698" description="Endoplasmic reticulum vesicle protein 25">
    <location>
        <begin position="26"/>
        <end position="224"/>
    </location>
</feature>
<feature type="topological domain" description="Lumenal" evidence="2">
    <location>
        <begin position="26"/>
        <end position="190"/>
    </location>
</feature>
<feature type="transmembrane region" description="Helical" evidence="2">
    <location>
        <begin position="191"/>
        <end position="211"/>
    </location>
</feature>
<feature type="topological domain" description="Cytoplasmic" evidence="2">
    <location>
        <begin position="212"/>
        <end position="224"/>
    </location>
</feature>
<feature type="domain" description="GOLD">
    <location>
        <begin position="38"/>
        <end position="131"/>
    </location>
</feature>